<proteinExistence type="evidence at transcript level"/>
<sequence>MGLKLSGRYIFLVLAVHLAYLLQAVKAAGKCDAVFKGLSDCMLTLGDKVANYPQDLEEKKNLDTICSYWDDFHVCTVTALADCQEGASDIWEKLKRQSKNLNIQGSLFELCPGSTGAPGPRLLFPAFLPLLIVFLSALLNWVLQ</sequence>
<name>NRN1B_XENLA</name>
<feature type="signal peptide" evidence="2">
    <location>
        <begin position="1"/>
        <end position="27"/>
    </location>
</feature>
<feature type="chain" id="PRO_0000262522" description="Neuritin-B">
    <location>
        <begin position="28"/>
        <end position="114"/>
    </location>
</feature>
<feature type="propeptide" id="PRO_0000262523" description="Removed in mature form" evidence="2">
    <location>
        <begin position="115"/>
        <end position="144"/>
    </location>
</feature>
<feature type="lipid moiety-binding region" description="GPI-anchor amidated serine" evidence="2">
    <location>
        <position position="114"/>
    </location>
</feature>
<organism>
    <name type="scientific">Xenopus laevis</name>
    <name type="common">African clawed frog</name>
    <dbReference type="NCBI Taxonomy" id="8355"/>
    <lineage>
        <taxon>Eukaryota</taxon>
        <taxon>Metazoa</taxon>
        <taxon>Chordata</taxon>
        <taxon>Craniata</taxon>
        <taxon>Vertebrata</taxon>
        <taxon>Euteleostomi</taxon>
        <taxon>Amphibia</taxon>
        <taxon>Batrachia</taxon>
        <taxon>Anura</taxon>
        <taxon>Pipoidea</taxon>
        <taxon>Pipidae</taxon>
        <taxon>Xenopodinae</taxon>
        <taxon>Xenopus</taxon>
        <taxon>Xenopus</taxon>
    </lineage>
</organism>
<gene>
    <name type="primary">nrn1-b</name>
</gene>
<accession>Q5U523</accession>
<keyword id="KW-1003">Cell membrane</keyword>
<keyword id="KW-0325">Glycoprotein</keyword>
<keyword id="KW-0336">GPI-anchor</keyword>
<keyword id="KW-0449">Lipoprotein</keyword>
<keyword id="KW-0472">Membrane</keyword>
<keyword id="KW-1185">Reference proteome</keyword>
<keyword id="KW-0732">Signal</keyword>
<dbReference type="EMBL" id="BC084862">
    <property type="protein sequence ID" value="AAH84862.1"/>
    <property type="molecule type" value="mRNA"/>
</dbReference>
<dbReference type="DNASU" id="495392"/>
<dbReference type="GeneID" id="495392"/>
<dbReference type="KEGG" id="xla:495392"/>
<dbReference type="AGR" id="Xenbase:XB-GENE-988299"/>
<dbReference type="CTD" id="495392"/>
<dbReference type="Xenbase" id="XB-GENE-988299">
    <property type="gene designation" value="nrn1.L"/>
</dbReference>
<dbReference type="OMA" id="CAYWEDF"/>
<dbReference type="OrthoDB" id="9928047at2759"/>
<dbReference type="Proteomes" id="UP000186698">
    <property type="component" value="Chromosome 6L"/>
</dbReference>
<dbReference type="Bgee" id="495392">
    <property type="expression patterns" value="Expressed in brain and 6 other cell types or tissues"/>
</dbReference>
<dbReference type="GO" id="GO:0005886">
    <property type="term" value="C:plasma membrane"/>
    <property type="evidence" value="ECO:0000318"/>
    <property type="project" value="GO_Central"/>
</dbReference>
<dbReference type="GO" id="GO:0098552">
    <property type="term" value="C:side of membrane"/>
    <property type="evidence" value="ECO:0007669"/>
    <property type="project" value="UniProtKB-KW"/>
</dbReference>
<dbReference type="GO" id="GO:1990138">
    <property type="term" value="P:neuron projection extension"/>
    <property type="evidence" value="ECO:0000318"/>
    <property type="project" value="GO_Central"/>
</dbReference>
<dbReference type="InterPro" id="IPR026144">
    <property type="entry name" value="Neuritin_fam"/>
</dbReference>
<dbReference type="PANTHER" id="PTHR15902:SF1">
    <property type="entry name" value="NEURITIN"/>
    <property type="match status" value="1"/>
</dbReference>
<dbReference type="PANTHER" id="PTHR15902">
    <property type="entry name" value="NEURITIN-RELATED"/>
    <property type="match status" value="1"/>
</dbReference>
<dbReference type="Pfam" id="PF15056">
    <property type="entry name" value="NRN1"/>
    <property type="match status" value="1"/>
</dbReference>
<protein>
    <recommendedName>
        <fullName>Neuritin-B</fullName>
    </recommendedName>
</protein>
<comment type="function">
    <text evidence="1">Modulates postsynaptic dendritic arbor elaboration and synaptic maturation.</text>
</comment>
<comment type="subcellular location">
    <subcellularLocation>
        <location evidence="3">Cell membrane</location>
        <topology evidence="3">Lipid-anchor</topology>
        <topology evidence="3">GPI-anchor</topology>
    </subcellularLocation>
</comment>
<comment type="similarity">
    <text evidence="3">Belongs to the neuritin family.</text>
</comment>
<reference key="1">
    <citation type="submission" date="2004-10" db="EMBL/GenBank/DDBJ databases">
        <authorList>
            <consortium name="NIH - Xenopus Gene Collection (XGC) project"/>
        </authorList>
    </citation>
    <scope>NUCLEOTIDE SEQUENCE [LARGE SCALE MRNA]</scope>
</reference>
<evidence type="ECO:0000250" key="1"/>
<evidence type="ECO:0000255" key="2"/>
<evidence type="ECO:0000305" key="3"/>